<gene>
    <name type="primary">DEFA1</name>
    <name type="synonym">DEF1</name>
    <name type="synonym">DEFA2</name>
    <name type="synonym">MRS</name>
</gene>
<gene>
    <name type="primary">DEFA1B</name>
</gene>
<proteinExistence type="evidence at protein level"/>
<sequence length="94" mass="10201">MRTLAILAAILLVALQAQAEPLQARADEVAAAPEQIAADIPEVVVSLAWDESLAPKHPGSRKNMACYCRIPACIAGERRYGTCIYQGRLWAFCC</sequence>
<name>DEF1_HUMAN</name>
<protein>
    <recommendedName>
        <fullName>Neutrophil defensin 1</fullName>
    </recommendedName>
    <alternativeName>
        <fullName>Defensin, alpha 1</fullName>
    </alternativeName>
    <alternativeName>
        <fullName>HNP-1</fullName>
        <shortName>HP-1</shortName>
        <shortName>HP1</shortName>
    </alternativeName>
    <component>
        <recommendedName>
            <fullName>HP 1-56</fullName>
        </recommendedName>
    </component>
    <component>
        <recommendedName>
            <fullName>Neutrophil defensin 2</fullName>
        </recommendedName>
        <alternativeName>
            <fullName>HNP-2</fullName>
            <shortName>HP-2</shortName>
            <shortName>HP2</shortName>
        </alternativeName>
    </component>
</protein>
<accession>P59665</accession>
<accession>P11479</accession>
<accession>Q14125</accession>
<accession>Q6EZF6</accession>
<keyword id="KW-0002">3D-structure</keyword>
<keyword id="KW-0013">ADP-ribosylation</keyword>
<keyword id="KW-0044">Antibiotic</keyword>
<keyword id="KW-0929">Antimicrobial</keyword>
<keyword id="KW-0051">Antiviral defense</keyword>
<keyword id="KW-0211">Defensin</keyword>
<keyword id="KW-0903">Direct protein sequencing</keyword>
<keyword id="KW-1015">Disulfide bond</keyword>
<keyword id="KW-0295">Fungicide</keyword>
<keyword id="KW-0945">Host-virus interaction</keyword>
<keyword id="KW-0597">Phosphoprotein</keyword>
<keyword id="KW-1267">Proteomics identification</keyword>
<keyword id="KW-1185">Reference proteome</keyword>
<keyword id="KW-0964">Secreted</keyword>
<keyword id="KW-0732">Signal</keyword>
<evidence type="ECO:0000269" key="1">
    <source>
    </source>
</evidence>
<evidence type="ECO:0000269" key="2">
    <source>
    </source>
</evidence>
<evidence type="ECO:0000269" key="3">
    <source>
    </source>
</evidence>
<evidence type="ECO:0000269" key="4">
    <source>
    </source>
</evidence>
<evidence type="ECO:0000269" key="5">
    <source>
    </source>
</evidence>
<evidence type="ECO:0000269" key="6">
    <source>
    </source>
</evidence>
<evidence type="ECO:0000269" key="7">
    <source>
    </source>
</evidence>
<evidence type="ECO:0000269" key="8">
    <source>
    </source>
</evidence>
<evidence type="ECO:0000269" key="9">
    <source>
    </source>
</evidence>
<evidence type="ECO:0000269" key="10">
    <source>
    </source>
</evidence>
<evidence type="ECO:0000269" key="11">
    <source>
    </source>
</evidence>
<evidence type="ECO:0000269" key="12">
    <source>
    </source>
</evidence>
<evidence type="ECO:0000269" key="13">
    <source>
    </source>
</evidence>
<evidence type="ECO:0000305" key="14"/>
<evidence type="ECO:0007744" key="15">
    <source>
        <dbReference type="PDB" id="3H6C"/>
    </source>
</evidence>
<evidence type="ECO:0007744" key="16">
    <source>
        <dbReference type="PDB" id="3LO1"/>
    </source>
</evidence>
<evidence type="ECO:0007744" key="17">
    <source>
        <dbReference type="PDB" id="3LO2"/>
    </source>
</evidence>
<evidence type="ECO:0007744" key="18">
    <source>
        <dbReference type="PDB" id="3LO4"/>
    </source>
</evidence>
<evidence type="ECO:0007744" key="19">
    <source>
        <dbReference type="PDB" id="3LO6"/>
    </source>
</evidence>
<evidence type="ECO:0007744" key="20">
    <source>
        <dbReference type="PDB" id="3LO9"/>
    </source>
</evidence>
<evidence type="ECO:0007744" key="21">
    <source>
        <dbReference type="PDB" id="3LOE"/>
    </source>
</evidence>
<evidence type="ECO:0007744" key="22">
    <source>
        <dbReference type="PDB" id="3LVX"/>
    </source>
</evidence>
<evidence type="ECO:0007744" key="23">
    <source>
        <dbReference type="PDB" id="4LB1"/>
    </source>
</evidence>
<evidence type="ECO:0007744" key="24">
    <source>
        <dbReference type="PDB" id="4LB7"/>
    </source>
</evidence>
<evidence type="ECO:0007744" key="25">
    <source>
        <dbReference type="PDB" id="4LBB"/>
    </source>
</evidence>
<evidence type="ECO:0007744" key="26">
    <source>
        <dbReference type="PDB" id="4LBF"/>
    </source>
</evidence>
<evidence type="ECO:0007829" key="27">
    <source>
        <dbReference type="PDB" id="3HJ2"/>
    </source>
</evidence>
<comment type="function">
    <text evidence="3 4 5 6 7 8 10 11 13">Effector molecule of the innate immune system that acts via antibiotic-like properties against a broad array of infectious agents including bacteria, fungi, and viruses or by promoting the activation and maturation of some APCs (PubMed:15616305, PubMed:17142766, PubMed:20220136, PubMed:24236072). Interacts with the essential precursor of cell wall synthesis lipid II to inhibit bacterial cell wall synthesis (PubMed:20214904). Inhibits adenovirus infection via inhibition of viral disassembly at the vertex region, thereby restricting the release of internal capsid protein pVI, which is required for endosomal membrane penetration during cell entry (PubMed:18191790). In addition, interaction with adenovirus capsid leads to the redirection of viral particles to TLR4 thereby promoting a NLRP3-mediated inflammasome response and interleukin 1-beta (IL-1beta) release (PubMed:35080426). Induces the production of proinflammatory cytokines including type I interferon (IFN) in plasmacytoid dendritic cells (pDCs) by triggering the degradation of NFKBIA and nuclear translocation of IRF1, both of which are required for activation of pDCs (PubMed:27031443).</text>
</comment>
<comment type="subunit">
    <text evidence="1 5 10">Tetramer (PubMed:24236072). Dimer (PubMed:17452329, PubMed:24236072). Interacts with RETN (PubMed:15064728).</text>
</comment>
<comment type="subunit">
    <text evidence="10">(Microbial infection) Interacts with HIV-1 surface protein gp120.</text>
</comment>
<comment type="subunit">
    <text evidence="4">(Microbial infection) Interacts with herpes virus 1 (HHV1) envelope glycoprotein B; this interaction inhibits viral infection.</text>
</comment>
<comment type="interaction">
    <interactant intactId="EBI-726336">
        <id>P59665</id>
    </interactant>
    <interactant intactId="EBI-947187">
        <id>Q9UHD9</id>
        <label>UBQLN2</label>
    </interactant>
    <organismsDiffer>false</organismsDiffer>
    <experiments>3</experiments>
</comment>
<comment type="interaction">
    <interactant intactId="EBI-27090284">
        <id>PRO_0000006773</id>
    </interactant>
    <interactant intactId="EBI-25474821">
        <id>P0DTC2</id>
        <label>S</label>
    </interactant>
    <organismsDiffer>true</organismsDiffer>
    <experiments>3</experiments>
</comment>
<comment type="subcellular location">
    <subcellularLocation>
        <location>Secreted</location>
    </subcellularLocation>
</comment>
<comment type="PTM">
    <text>ADP-ribosylation drastically reduces cytotoxic and antibacterial activities, and enhances IL8 production.</text>
</comment>
<comment type="PTM">
    <text evidence="9">Phosphorylation at Tyr-85 has been found in some cancer cell lines, and interferes with ADP-ribosylation.</text>
</comment>
<comment type="similarity">
    <text evidence="14">Belongs to the alpha-defensin family.</text>
</comment>
<feature type="signal peptide" evidence="2">
    <location>
        <begin position="1"/>
        <end position="19"/>
    </location>
</feature>
<feature type="propeptide" id="PRO_0000006771">
    <location>
        <begin position="20"/>
        <end position="38"/>
    </location>
</feature>
<feature type="chain" id="PRO_0000006772" description="HP 1-56">
    <location>
        <begin position="39"/>
        <end position="94"/>
    </location>
</feature>
<feature type="peptide" id="PRO_0000006773" description="Neutrophil defensin 1">
    <location>
        <begin position="65"/>
        <end position="94"/>
    </location>
</feature>
<feature type="peptide" id="PRO_0000006774" description="Neutrophil defensin 2">
    <location>
        <begin position="66"/>
        <end position="94"/>
    </location>
</feature>
<feature type="modified residue" description="ADP-ribosylarginine; by ART1" evidence="9">
    <location>
        <position position="78"/>
    </location>
</feature>
<feature type="modified residue" description="Phosphotyrosine" evidence="9">
    <location>
        <position position="85"/>
    </location>
</feature>
<feature type="modified residue" description="ADP-ribosylarginine; by ART1" evidence="9">
    <location>
        <position position="88"/>
    </location>
</feature>
<feature type="disulfide bond" evidence="12">
    <location>
        <begin position="66"/>
        <end position="94"/>
    </location>
</feature>
<feature type="disulfide bond" evidence="12">
    <location>
        <begin position="68"/>
        <end position="83"/>
    </location>
</feature>
<feature type="disulfide bond" evidence="12">
    <location>
        <begin position="73"/>
        <end position="93"/>
    </location>
</feature>
<feature type="mutagenesis site" description="Almost complete loss of bactericidal activity." evidence="8">
    <original>W</original>
    <variation>A</variation>
    <location>
        <position position="90"/>
    </location>
</feature>
<feature type="strand" evidence="27">
    <location>
        <begin position="66"/>
        <end position="72"/>
    </location>
</feature>
<feature type="strand" evidence="27">
    <location>
        <begin position="79"/>
        <end position="85"/>
    </location>
</feature>
<feature type="strand" evidence="27">
    <location>
        <begin position="88"/>
        <end position="93"/>
    </location>
</feature>
<reference key="1">
    <citation type="journal article" date="1988" name="Proc. Natl. Acad. Sci. U.S.A.">
        <title>Isolation and characterization of human defensin cDNA clones.</title>
        <authorList>
            <person name="Daher K.A."/>
            <person name="Lehrer R.I."/>
            <person name="Ganz T."/>
            <person name="Kronenberg M."/>
        </authorList>
    </citation>
    <scope>NUCLEOTIDE SEQUENCE [MRNA]</scope>
</reference>
<reference key="2">
    <citation type="journal article" date="1988" name="Blood">
        <title>A myeloid-related sequence that localizes to human chromosome 8q21.1-22.</title>
        <authorList>
            <person name="Mars W.M."/>
            <person name="vanTuinen P."/>
            <person name="Drabkin H.A."/>
            <person name="White J.W."/>
            <person name="Saunders G.F."/>
        </authorList>
    </citation>
    <scope>NUCLEOTIDE SEQUENCE [MRNA]</scope>
</reference>
<reference key="3">
    <citation type="journal article" date="1989" name="Leukemia">
        <title>Differentiation stage-specific expression of a gene during granulopoiesis.</title>
        <authorList>
            <person name="Wiedemann L.M."/>
            <person name="Francis G.E."/>
            <person name="Lamb R.F."/>
            <person name="Burns J.H."/>
            <person name="Winnie J.N."/>
            <person name="McKenzie E.D."/>
            <person name="Birnie G.D."/>
        </authorList>
    </citation>
    <scope>NUCLEOTIDE SEQUENCE [MRNA]</scope>
</reference>
<reference key="4">
    <citation type="journal article" date="1995" name="J. Biol. Chem.">
        <title>Inheritance of unequal numbers of the genes encoding the human neutrophil defensins HP-1 and HP-3.</title>
        <authorList>
            <person name="Mars W.M."/>
            <person name="Patmasiriwat P."/>
            <person name="Maity T."/>
            <person name="Huff V."/>
            <person name="Weil M.M."/>
            <person name="Saunders G.F."/>
        </authorList>
    </citation>
    <scope>NUCLEOTIDE SEQUENCE [MRNA]</scope>
</reference>
<reference key="5">
    <citation type="journal article" date="1993" name="FEBS Lett.">
        <title>The structure of neutrophil defensin genes.</title>
        <authorList>
            <person name="Linzmeier R."/>
            <person name="Michaelson D."/>
            <person name="Liu L."/>
            <person name="Ganz T."/>
        </authorList>
    </citation>
    <scope>NUCLEOTIDE SEQUENCE [GENOMIC DNA]</scope>
</reference>
<reference key="6">
    <citation type="journal article" date="1993" name="FEBS Lett.">
        <authorList>
            <person name="Linzmeier R."/>
            <person name="Michaelson D."/>
            <person name="Liu L."/>
            <person name="Ganz T."/>
        </authorList>
    </citation>
    <scope>ERRATUM OF PUBMED:8477861</scope>
</reference>
<reference key="7">
    <citation type="journal article" date="2006" name="Nature">
        <title>DNA sequence and analysis of human chromosome 8.</title>
        <authorList>
            <person name="Nusbaum C."/>
            <person name="Mikkelsen T.S."/>
            <person name="Zody M.C."/>
            <person name="Asakawa S."/>
            <person name="Taudien S."/>
            <person name="Garber M."/>
            <person name="Kodira C.D."/>
            <person name="Schueler M.G."/>
            <person name="Shimizu A."/>
            <person name="Whittaker C.A."/>
            <person name="Chang J.L."/>
            <person name="Cuomo C.A."/>
            <person name="Dewar K."/>
            <person name="FitzGerald M.G."/>
            <person name="Yang X."/>
            <person name="Allen N.R."/>
            <person name="Anderson S."/>
            <person name="Asakawa T."/>
            <person name="Blechschmidt K."/>
            <person name="Bloom T."/>
            <person name="Borowsky M.L."/>
            <person name="Butler J."/>
            <person name="Cook A."/>
            <person name="Corum B."/>
            <person name="DeArellano K."/>
            <person name="DeCaprio D."/>
            <person name="Dooley K.T."/>
            <person name="Dorris L. III"/>
            <person name="Engels R."/>
            <person name="Gloeckner G."/>
            <person name="Hafez N."/>
            <person name="Hagopian D.S."/>
            <person name="Hall J.L."/>
            <person name="Ishikawa S.K."/>
            <person name="Jaffe D.B."/>
            <person name="Kamat A."/>
            <person name="Kudoh J."/>
            <person name="Lehmann R."/>
            <person name="Lokitsang T."/>
            <person name="Macdonald P."/>
            <person name="Major J.E."/>
            <person name="Matthews C.D."/>
            <person name="Mauceli E."/>
            <person name="Menzel U."/>
            <person name="Mihalev A.H."/>
            <person name="Minoshima S."/>
            <person name="Murayama Y."/>
            <person name="Naylor J.W."/>
            <person name="Nicol R."/>
            <person name="Nguyen C."/>
            <person name="O'Leary S.B."/>
            <person name="O'Neill K."/>
            <person name="Parker S.C.J."/>
            <person name="Polley A."/>
            <person name="Raymond C.K."/>
            <person name="Reichwald K."/>
            <person name="Rodriguez J."/>
            <person name="Sasaki T."/>
            <person name="Schilhabel M."/>
            <person name="Siddiqui R."/>
            <person name="Smith C.L."/>
            <person name="Sneddon T.P."/>
            <person name="Talamas J.A."/>
            <person name="Tenzin P."/>
            <person name="Topham K."/>
            <person name="Venkataraman V."/>
            <person name="Wen G."/>
            <person name="Yamazaki S."/>
            <person name="Young S.K."/>
            <person name="Zeng Q."/>
            <person name="Zimmer A.R."/>
            <person name="Rosenthal A."/>
            <person name="Birren B.W."/>
            <person name="Platzer M."/>
            <person name="Shimizu N."/>
            <person name="Lander E.S."/>
        </authorList>
    </citation>
    <scope>NUCLEOTIDE SEQUENCE [LARGE SCALE GENOMIC DNA]</scope>
</reference>
<reference key="8">
    <citation type="journal article" date="2004" name="Genome Res.">
        <title>The status, quality, and expansion of the NIH full-length cDNA project: the Mammalian Gene Collection (MGC).</title>
        <authorList>
            <consortium name="The MGC Project Team"/>
        </authorList>
    </citation>
    <scope>NUCLEOTIDE SEQUENCE [LARGE SCALE MRNA]</scope>
    <source>
        <tissue>Liver</tissue>
    </source>
</reference>
<reference key="9">
    <citation type="journal article" date="1985" name="J. Clin. Invest.">
        <title>Primary structures of three human neutrophil defensins.</title>
        <authorList>
            <person name="Selsted M.E."/>
            <person name="Harwig S.S.L."/>
            <person name="Ganz T."/>
            <person name="Schilling J.W."/>
            <person name="Lehrer R.I."/>
        </authorList>
    </citation>
    <scope>PROTEIN SEQUENCE OF 65-94</scope>
</reference>
<reference key="10">
    <citation type="journal article" date="2004" name="Protein Sci.">
        <title>Signal peptide prediction based on analysis of experimentally verified cleavage sites.</title>
        <authorList>
            <person name="Zhang Z."/>
            <person name="Henzel W.J."/>
        </authorList>
    </citation>
    <scope>PROTEIN SEQUENCE OF 20-34</scope>
</reference>
<reference key="11">
    <citation type="journal article" date="1989" name="J. Biol. Chem.">
        <title>Determination of the disulfide array in the human defensin HNP-2. A covalently cyclized peptide.</title>
        <authorList>
            <person name="Selsted M.E."/>
            <person name="Harwig S.S.L."/>
        </authorList>
    </citation>
    <scope>DISULFIDE BONDS</scope>
</reference>
<reference key="12">
    <citation type="journal article" date="1991" name="J. Biol. Chem.">
        <title>The isolation and identification of multiple forms of the neutrophil granule peptides from human leukemic cells.</title>
        <authorList>
            <person name="Bateman A."/>
            <person name="Singh A."/>
            <person name="Shustik C."/>
            <person name="Mars W.M."/>
            <person name="Solomon S."/>
        </authorList>
    </citation>
    <scope>PROTEOLYTIC PROCESSING</scope>
</reference>
<reference key="13">
    <citation type="journal article" date="1992" name="Blood">
        <title>Posttranslational processing of defensins in immature human myeloid cells.</title>
        <authorList>
            <person name="Valore E.V."/>
            <person name="Ganz T."/>
        </authorList>
    </citation>
    <scope>PROTEOLYTIC PROCESSING</scope>
</reference>
<reference key="14">
    <citation type="journal article" date="2004" name="Oncogene">
        <title>Identification of murine and human XCP1 genes as C/EBP-epsilon-dependent members of FIZZ/Resistin gene family.</title>
        <authorList>
            <person name="Chumakov A.M."/>
            <person name="Kubota T."/>
            <person name="Walter S."/>
            <person name="Koeffler H.P."/>
        </authorList>
    </citation>
    <scope>INTERACTION WITH RETN</scope>
</reference>
<reference key="15">
    <citation type="journal article" date="2005" name="Antimicrob. Agents Chemother.">
        <title>Antibacterial activity and specificity of the six human alpha-defensins.</title>
        <authorList>
            <person name="Ericksen B."/>
            <person name="Wu Z."/>
            <person name="Lu W."/>
            <person name="Lehrer R.I."/>
        </authorList>
    </citation>
    <scope>FUNCTION</scope>
</reference>
<reference key="16">
    <citation type="journal article" date="2006" name="J. Immunol.">
        <title>Human alpha- and beta-defensins block multiple steps in herpes simplex virus infection.</title>
        <authorList>
            <person name="Hazrati E."/>
            <person name="Galen B."/>
            <person name="Lu W."/>
            <person name="Wang W."/>
            <person name="Ouyang Y."/>
            <person name="Keller M.J."/>
            <person name="Lehrer R.I."/>
            <person name="Herold B.C."/>
        </authorList>
    </citation>
    <scope>INTERACTION WITH HERPES VIRUS 1 ENVELOPE GLYCOPROTEIN B (MICROBIAL INFECTION)</scope>
    <scope>FUNCTION</scope>
</reference>
<reference key="17">
    <citation type="journal article" date="2008" name="Cell Host Microbe">
        <title>Mechanism of adenovirus neutralization by Human alpha-defensins.</title>
        <authorList>
            <person name="Smith J.G."/>
            <person name="Nemerow G.R."/>
        </authorList>
    </citation>
    <scope>FUNCTION</scope>
</reference>
<reference key="18">
    <citation type="journal article" date="2010" name="FEBS Lett.">
        <title>Functional interaction of human neutrophil peptide-1 with the cell wall precursor lipid II.</title>
        <authorList>
            <person name="de Leeuw E."/>
            <person name="Li C."/>
            <person name="Zeng P."/>
            <person name="Li C."/>
            <person name="Diepeveen-de Buin M."/>
            <person name="Lu W.Y."/>
            <person name="Breukink E."/>
            <person name="Lu W."/>
        </authorList>
    </citation>
    <scope>FUNCTION</scope>
</reference>
<reference key="19">
    <citation type="journal article" date="2011" name="Int. J. Pept.">
        <title>Structural and functional consequences induced by post-translational modifications in alpha-Defensins.</title>
        <authorList>
            <person name="Balducci E."/>
            <person name="Bonucci A."/>
            <person name="Picchianti M."/>
            <person name="Pogni R."/>
            <person name="Talluri E."/>
        </authorList>
    </citation>
    <scope>ADP-RIBOSYLATION AT ARG-78 AND ARG-88 BY ART1</scope>
    <scope>PHOSPHORYLATION AT TYR-85</scope>
</reference>
<reference key="20">
    <citation type="journal article" date="2016" name="Cytokine">
        <title>Alarmin human alpha defensin HNP1 activates plasmacytoid dendritic cells by triggering NF-kappaB and IRF1 signaling pathways.</title>
        <authorList>
            <person name="Wang F."/>
            <person name="Qiao L."/>
            <person name="Lv X."/>
            <person name="Trivett A."/>
            <person name="Yang R."/>
            <person name="Oppenheim J.J."/>
            <person name="Yang D."/>
            <person name="Zhang N."/>
        </authorList>
    </citation>
    <scope>FUNCTION</scope>
</reference>
<reference key="21">
    <citation type="journal article" date="2022" name="J. Virol.">
        <title>Adenovirus-alpha-Defensin Complexes Induce NLRP3-Associated Maturation of Human Phagocytes via Toll-Like Receptor 4 Engagement.</title>
        <authorList>
            <person name="Eichholz K."/>
            <person name="Tran T.H."/>
            <person name="Cheneau C."/>
            <person name="Tran T.T.P."/>
            <person name="Paris O."/>
            <person name="Pugniere M."/>
            <person name="Kremer E.J."/>
        </authorList>
    </citation>
    <scope>FUNCTION</scope>
</reference>
<reference key="22">
    <citation type="journal article" date="1992" name="Biochemistry">
        <title>NMR studies of defensin antimicrobial peptides. 1. Resonance assignment and secondary structure determination of rabbit NP-2 and human HNP-1.</title>
        <authorList>
            <person name="Zhang X.-L."/>
            <person name="Selsted M.E."/>
            <person name="Pardi A."/>
        </authorList>
    </citation>
    <scope>STRUCTURE BY NMR OF DEFENSIN 1</scope>
</reference>
<reference key="23">
    <citation type="journal article" date="1992" name="Biochemistry">
        <title>NMR studies of defensin antimicrobial peptides. 2. Three-dimensional structures of rabbit NP-2 and human HNP-1.</title>
        <authorList>
            <person name="Pardi A."/>
            <person name="Zhang X.-L."/>
            <person name="Selsted M.E."/>
            <person name="Skalicky J.J."/>
            <person name="Yip P.F."/>
        </authorList>
    </citation>
    <scope>STRUCTURE BY NMR OF DEFENSIN 1</scope>
</reference>
<reference key="24">
    <citation type="journal article" date="2007" name="J. Biol. Chem.">
        <title>Toward understanding the cationicity of defensins. Arg and Lys versus their noncoded analogs.</title>
        <authorList>
            <person name="Zou G."/>
            <person name="de Leeuw E."/>
            <person name="Li C."/>
            <person name="Pazgier M."/>
            <person name="Li C."/>
            <person name="Zeng P."/>
            <person name="Lu W.-Y."/>
            <person name="Lubkowski J."/>
            <person name="Lu W."/>
        </authorList>
    </citation>
    <scope>X-RAY CRYSTALLOGRAPHY (1.6 ANGSTROMS) OF 65-94</scope>
    <scope>FUNCTION</scope>
    <scope>SUBUNIT</scope>
</reference>
<reference evidence="15 16 17 18 19 20 21 22" key="25">
    <citation type="journal article" date="2010" name="J. Biol. Chem.">
        <title>Trp-26 imparts functional versatility to human alpha-defensin HNP1.</title>
        <authorList>
            <person name="Wei G."/>
            <person name="Pazgier M."/>
            <person name="de Leeuw E."/>
            <person name="Rajabi M."/>
            <person name="Li J."/>
            <person name="Zou G."/>
            <person name="Jung G."/>
            <person name="Yuan W."/>
            <person name="Lu W.Y."/>
            <person name="Lehrer R.I."/>
            <person name="Lu W."/>
        </authorList>
    </citation>
    <scope>X-RAY CRYSTALLOGRAPHY (1.56 ANGSTROMS) OF 65-94</scope>
    <scope>MUTAGENESIS OF TRP-90</scope>
    <scope>FUNCTION</scope>
</reference>
<reference evidence="23 24 25 26" key="26">
    <citation type="journal article" date="2013" name="PLoS ONE">
        <title>Single, double and quadruple alanine substitutions at oligomeric interfaces identify hydrophobicity as the key determinant of human neutrophil alpha defensin HNP1 function.</title>
        <authorList>
            <person name="Zhao L."/>
            <person name="Tolbert W.D."/>
            <person name="Ericksen B."/>
            <person name="Zhan C."/>
            <person name="Wu X."/>
            <person name="Yuan W."/>
            <person name="Li X."/>
            <person name="Pazgier M."/>
            <person name="Lu W."/>
        </authorList>
    </citation>
    <scope>X-RAY CRYSTALLOGRAPHY (1.70 ANGSTROMS) OF 65-94</scope>
    <scope>FUNCTION</scope>
    <scope>SUBUNIT</scope>
    <scope>INTERACTION WITH HIV-1 SURFACE PROTEIN GP120 (MICROBIAL INFECTION)</scope>
</reference>
<dbReference type="EMBL" id="M21130">
    <property type="protein sequence ID" value="AAA52302.1"/>
    <property type="molecule type" value="mRNA"/>
</dbReference>
<dbReference type="EMBL" id="M26602">
    <property type="protein sequence ID" value="AAA52303.1"/>
    <property type="molecule type" value="mRNA"/>
</dbReference>
<dbReference type="EMBL" id="L12690">
    <property type="protein sequence ID" value="AAA36382.1"/>
    <property type="molecule type" value="Genomic_DNA"/>
</dbReference>
<dbReference type="EMBL" id="X52053">
    <property type="protein sequence ID" value="CAA36280.1"/>
    <property type="molecule type" value="mRNA"/>
</dbReference>
<dbReference type="EMBL" id="AF200455">
    <property type="protein sequence ID" value="AAT68875.1"/>
    <property type="molecule type" value="Genomic_DNA"/>
</dbReference>
<dbReference type="EMBL" id="AF200455">
    <property type="protein sequence ID" value="AAT68878.1"/>
    <property type="molecule type" value="Genomic_DNA"/>
</dbReference>
<dbReference type="EMBL" id="AF200455">
    <property type="protein sequence ID" value="AAT68879.1"/>
    <property type="molecule type" value="Genomic_DNA"/>
</dbReference>
<dbReference type="EMBL" id="AF200455">
    <property type="protein sequence ID" value="AAT68880.1"/>
    <property type="molecule type" value="Genomic_DNA"/>
</dbReference>
<dbReference type="EMBL" id="AF238378">
    <property type="protein sequence ID" value="AAT68883.1"/>
    <property type="molecule type" value="Genomic_DNA"/>
</dbReference>
<dbReference type="EMBL" id="AF238378">
    <property type="protein sequence ID" value="AAT68884.1"/>
    <property type="molecule type" value="Genomic_DNA"/>
</dbReference>
<dbReference type="EMBL" id="BC069423">
    <property type="protein sequence ID" value="AAH69423.1"/>
    <property type="molecule type" value="mRNA"/>
</dbReference>
<dbReference type="EMBL" id="BC093791">
    <property type="protein sequence ID" value="AAH93791.1"/>
    <property type="molecule type" value="mRNA"/>
</dbReference>
<dbReference type="EMBL" id="BC112188">
    <property type="protein sequence ID" value="AAI12189.1"/>
    <property type="molecule type" value="mRNA"/>
</dbReference>
<dbReference type="CCDS" id="CCDS34797.1"/>
<dbReference type="CCDS" id="CCDS43691.1"/>
<dbReference type="PIR" id="S32499">
    <property type="entry name" value="A40499"/>
</dbReference>
<dbReference type="RefSeq" id="NP_001035965.1">
    <property type="nucleotide sequence ID" value="NM_001042500.1"/>
</dbReference>
<dbReference type="RefSeq" id="NP_004075.1">
    <property type="nucleotide sequence ID" value="NM_004084.4"/>
</dbReference>
<dbReference type="PDB" id="2KHT">
    <property type="method" value="NMR"/>
    <property type="chains" value="A=65-94"/>
</dbReference>
<dbReference type="PDB" id="2PM1">
    <property type="method" value="X-ray"/>
    <property type="resolution" value="1.60 A"/>
    <property type="chains" value="A=65-94"/>
</dbReference>
<dbReference type="PDB" id="3GNY">
    <property type="method" value="X-ray"/>
    <property type="resolution" value="1.56 A"/>
    <property type="chains" value="A/B=65-94"/>
</dbReference>
<dbReference type="PDB" id="3H6C">
    <property type="method" value="X-ray"/>
    <property type="resolution" value="1.63 A"/>
    <property type="chains" value="A/B=65-94"/>
</dbReference>
<dbReference type="PDB" id="3HJ2">
    <property type="method" value="X-ray"/>
    <property type="resolution" value="1.40 A"/>
    <property type="chains" value="A/B=65-94"/>
</dbReference>
<dbReference type="PDB" id="3HJD">
    <property type="method" value="X-ray"/>
    <property type="resolution" value="1.65 A"/>
    <property type="chains" value="A/B=65-94"/>
</dbReference>
<dbReference type="PDB" id="3LO1">
    <property type="method" value="X-ray"/>
    <property type="resolution" value="1.60 A"/>
    <property type="chains" value="A=65-94"/>
</dbReference>
<dbReference type="PDB" id="3LO2">
    <property type="method" value="X-ray"/>
    <property type="resolution" value="1.56 A"/>
    <property type="chains" value="A/B=65-94"/>
</dbReference>
<dbReference type="PDB" id="3LO4">
    <property type="method" value="X-ray"/>
    <property type="resolution" value="1.75 A"/>
    <property type="chains" value="A/B=65-94"/>
</dbReference>
<dbReference type="PDB" id="3LO6">
    <property type="method" value="X-ray"/>
    <property type="resolution" value="1.56 A"/>
    <property type="chains" value="A/B=65-94"/>
</dbReference>
<dbReference type="PDB" id="3LO9">
    <property type="method" value="X-ray"/>
    <property type="resolution" value="1.56 A"/>
    <property type="chains" value="A/B=65-94"/>
</dbReference>
<dbReference type="PDB" id="3LOE">
    <property type="method" value="X-ray"/>
    <property type="resolution" value="1.56 A"/>
    <property type="chains" value="A=65-94"/>
</dbReference>
<dbReference type="PDB" id="3LVX">
    <property type="method" value="X-ray"/>
    <property type="resolution" value="1.63 A"/>
    <property type="chains" value="A/B=65-94"/>
</dbReference>
<dbReference type="PDB" id="4DU0">
    <property type="method" value="X-ray"/>
    <property type="resolution" value="1.90 A"/>
    <property type="chains" value="A/B/C/D=65-94"/>
</dbReference>
<dbReference type="PDB" id="4LB1">
    <property type="method" value="X-ray"/>
    <property type="resolution" value="2.00 A"/>
    <property type="chains" value="A/B/D/E=65-94"/>
</dbReference>
<dbReference type="PDB" id="4LB7">
    <property type="method" value="X-ray"/>
    <property type="resolution" value="1.90 A"/>
    <property type="chains" value="A/B/D/E=65-94"/>
</dbReference>
<dbReference type="PDB" id="4LBB">
    <property type="method" value="X-ray"/>
    <property type="resolution" value="1.72 A"/>
    <property type="chains" value="A/B=65-94"/>
</dbReference>
<dbReference type="PDB" id="4LBF">
    <property type="method" value="X-ray"/>
    <property type="resolution" value="1.70 A"/>
    <property type="chains" value="A/B/C/D/E/F/G/H=65-94"/>
</dbReference>
<dbReference type="PDBsum" id="2KHT"/>
<dbReference type="PDBsum" id="2PM1"/>
<dbReference type="PDBsum" id="3GNY"/>
<dbReference type="PDBsum" id="3H6C"/>
<dbReference type="PDBsum" id="3HJ2"/>
<dbReference type="PDBsum" id="3HJD"/>
<dbReference type="PDBsum" id="3LO1"/>
<dbReference type="PDBsum" id="3LO2"/>
<dbReference type="PDBsum" id="3LO4"/>
<dbReference type="PDBsum" id="3LO6"/>
<dbReference type="PDBsum" id="3LO9"/>
<dbReference type="PDBsum" id="3LOE"/>
<dbReference type="PDBsum" id="3LVX"/>
<dbReference type="PDBsum" id="4DU0"/>
<dbReference type="PDBsum" id="4LB1"/>
<dbReference type="PDBsum" id="4LB7"/>
<dbReference type="PDBsum" id="4LBB"/>
<dbReference type="PDBsum" id="4LBF"/>
<dbReference type="BMRB" id="P59665"/>
<dbReference type="SMR" id="P59665"/>
<dbReference type="BioGRID" id="108031">
    <property type="interactions" value="117"/>
</dbReference>
<dbReference type="BioGRID" id="608786">
    <property type="interactions" value="13"/>
</dbReference>
<dbReference type="FunCoup" id="P59665">
    <property type="interactions" value="438"/>
</dbReference>
<dbReference type="IntAct" id="P59665">
    <property type="interactions" value="110"/>
</dbReference>
<dbReference type="MINT" id="P59665"/>
<dbReference type="STRING" id="9606.ENSP00000372136"/>
<dbReference type="TCDB" id="1.C.19.1.1">
    <property type="family name" value="the defensin (defensin) family"/>
</dbReference>
<dbReference type="iPTMnet" id="P59665"/>
<dbReference type="PhosphoSitePlus" id="P59665"/>
<dbReference type="BioMuta" id="DEFA1"/>
<dbReference type="DMDM" id="30316322"/>
<dbReference type="jPOST" id="P59665"/>
<dbReference type="MassIVE" id="P59665"/>
<dbReference type="PaxDb" id="9606-ENSP00000372136"/>
<dbReference type="PeptideAtlas" id="P59665"/>
<dbReference type="PRIDE" id="P59665"/>
<dbReference type="ProteomicsDB" id="57154"/>
<dbReference type="Pumba" id="P59665"/>
<dbReference type="TopDownProteomics" id="P59665"/>
<dbReference type="Antibodypedia" id="74056">
    <property type="antibodies" value="15 antibodies from 4 providers"/>
</dbReference>
<dbReference type="Antibodypedia" id="8213">
    <property type="antibodies" value="406 antibodies from 37 providers"/>
</dbReference>
<dbReference type="DNASU" id="1667"/>
<dbReference type="Ensembl" id="ENST00000382689.8">
    <property type="protein sequence ID" value="ENSP00000372136.3"/>
    <property type="gene ID" value="ENSG00000240247.8"/>
</dbReference>
<dbReference type="Ensembl" id="ENST00000382692.3">
    <property type="protein sequence ID" value="ENSP00000372139.2"/>
    <property type="gene ID" value="ENSG00000206047.4"/>
</dbReference>
<dbReference type="Ensembl" id="ENST00000644528.1">
    <property type="protein sequence ID" value="ENSP00000496578.1"/>
    <property type="gene ID" value="ENSG00000284983.2"/>
</dbReference>
<dbReference type="Ensembl" id="ENST00000645146.2">
    <property type="protein sequence ID" value="ENSP00000493747.1"/>
    <property type="gene ID" value="ENSG00000285176.2"/>
</dbReference>
<dbReference type="GeneID" id="1667"/>
<dbReference type="GeneID" id="728358"/>
<dbReference type="KEGG" id="hsa:1667"/>
<dbReference type="KEGG" id="hsa:728358"/>
<dbReference type="MANE-Select" id="ENST00000382689.8">
    <property type="protein sequence ID" value="ENSP00000372136.3"/>
    <property type="RefSeq nucleotide sequence ID" value="NM_001042500.2"/>
    <property type="RefSeq protein sequence ID" value="NP_001035965.1"/>
</dbReference>
<dbReference type="MANE-Select" id="ENST00000382692.3">
    <property type="protein sequence ID" value="ENSP00000372139.2"/>
    <property type="RefSeq nucleotide sequence ID" value="NM_004084.4"/>
    <property type="RefSeq protein sequence ID" value="NP_004075.1"/>
</dbReference>
<dbReference type="UCSC" id="uc003wqv.2">
    <property type="organism name" value="human"/>
</dbReference>
<dbReference type="AGR" id="HGNC:2761"/>
<dbReference type="AGR" id="HGNC:33596"/>
<dbReference type="CTD" id="1667"/>
<dbReference type="CTD" id="728358"/>
<dbReference type="DisGeNET" id="1667"/>
<dbReference type="DisGeNET" id="728358"/>
<dbReference type="GeneCards" id="DEFA1"/>
<dbReference type="GeneCards" id="DEFA1B"/>
<dbReference type="HGNC" id="HGNC:2761">
    <property type="gene designation" value="DEFA1"/>
</dbReference>
<dbReference type="HGNC" id="HGNC:33596">
    <property type="gene designation" value="DEFA1B"/>
</dbReference>
<dbReference type="HPA" id="ENSG00000206047">
    <property type="expression patterns" value="Tissue enriched (bone)"/>
</dbReference>
<dbReference type="HPA" id="ENSG00000240247">
    <property type="expression patterns" value="Tissue enhanced (bone marrow, lung, lymphoid tissue)"/>
</dbReference>
<dbReference type="MIM" id="125220">
    <property type="type" value="gene"/>
</dbReference>
<dbReference type="neXtProt" id="NX_P59665"/>
<dbReference type="OpenTargets" id="ENSG00000206047"/>
<dbReference type="OpenTargets" id="ENSG00000240247"/>
<dbReference type="PharmGKB" id="PA165585475"/>
<dbReference type="VEuPathDB" id="HostDB:ENSG00000206047"/>
<dbReference type="VEuPathDB" id="HostDB:ENSG00000240247"/>
<dbReference type="eggNOG" id="ENOG502T2EX">
    <property type="taxonomic scope" value="Eukaryota"/>
</dbReference>
<dbReference type="GeneTree" id="ENSGT00940000153268"/>
<dbReference type="HOGENOM" id="CLU_160803_0_0_1"/>
<dbReference type="InParanoid" id="P59665"/>
<dbReference type="OMA" id="DEMPAQK"/>
<dbReference type="OrthoDB" id="9530339at2759"/>
<dbReference type="PAN-GO" id="P59665">
    <property type="GO annotations" value="8 GO annotations based on evolutionary models"/>
</dbReference>
<dbReference type="PhylomeDB" id="P59665"/>
<dbReference type="TreeFam" id="TF338414"/>
<dbReference type="PathwayCommons" id="P59665"/>
<dbReference type="Reactome" id="R-HSA-1461973">
    <property type="pathway name" value="Defensins"/>
</dbReference>
<dbReference type="Reactome" id="R-HSA-1462054">
    <property type="pathway name" value="Alpha-defensins"/>
</dbReference>
<dbReference type="Reactome" id="R-HSA-6798695">
    <property type="pathway name" value="Neutrophil degranulation"/>
</dbReference>
<dbReference type="SignaLink" id="P59665"/>
<dbReference type="BioGRID-ORCS" id="1667">
    <property type="hits" value="6 hits in 608 CRISPR screens"/>
</dbReference>
<dbReference type="BioGRID-ORCS" id="728358">
    <property type="hits" value="3 hits in 239 CRISPR screens"/>
</dbReference>
<dbReference type="ChiTaRS" id="DEFA1B">
    <property type="organism name" value="human"/>
</dbReference>
<dbReference type="EvolutionaryTrace" id="P59665"/>
<dbReference type="GeneWiki" id="DEFA1B"/>
<dbReference type="GeneWiki" id="Defensin,_alpha_1"/>
<dbReference type="Pharos" id="P59665">
    <property type="development level" value="Tbio"/>
</dbReference>
<dbReference type="PRO" id="PR:P59665"/>
<dbReference type="Proteomes" id="UP000005640">
    <property type="component" value="Chromosome 8"/>
</dbReference>
<dbReference type="RNAct" id="P59665">
    <property type="molecule type" value="protein"/>
</dbReference>
<dbReference type="Bgee" id="ENSG00000206047">
    <property type="expression patterns" value="Expressed in right lung and 93 other cell types or tissues"/>
</dbReference>
<dbReference type="GO" id="GO:0035578">
    <property type="term" value="C:azurophil granule lumen"/>
    <property type="evidence" value="ECO:0000304"/>
    <property type="project" value="Reactome"/>
</dbReference>
<dbReference type="GO" id="GO:0062023">
    <property type="term" value="C:collagen-containing extracellular matrix"/>
    <property type="evidence" value="ECO:0007005"/>
    <property type="project" value="BHF-UCL"/>
</dbReference>
<dbReference type="GO" id="GO:0070062">
    <property type="term" value="C:extracellular exosome"/>
    <property type="evidence" value="ECO:0007005"/>
    <property type="project" value="UniProtKB"/>
</dbReference>
<dbReference type="GO" id="GO:0005576">
    <property type="term" value="C:extracellular region"/>
    <property type="evidence" value="ECO:0000304"/>
    <property type="project" value="Reactome"/>
</dbReference>
<dbReference type="GO" id="GO:0005615">
    <property type="term" value="C:extracellular space"/>
    <property type="evidence" value="ECO:0000314"/>
    <property type="project" value="UniProtKB"/>
</dbReference>
<dbReference type="GO" id="GO:0005796">
    <property type="term" value="C:Golgi lumen"/>
    <property type="evidence" value="ECO:0000304"/>
    <property type="project" value="Reactome"/>
</dbReference>
<dbReference type="GO" id="GO:0140911">
    <property type="term" value="F:pore-forming activity"/>
    <property type="evidence" value="ECO:0000314"/>
    <property type="project" value="UniProtKB"/>
</dbReference>
<dbReference type="GO" id="GO:0019731">
    <property type="term" value="P:antibacterial humoral response"/>
    <property type="evidence" value="ECO:0000314"/>
    <property type="project" value="UniProtKB"/>
</dbReference>
<dbReference type="GO" id="GO:0061844">
    <property type="term" value="P:antimicrobial humoral immune response mediated by antimicrobial peptide"/>
    <property type="evidence" value="ECO:0000314"/>
    <property type="project" value="UniProtKB"/>
</dbReference>
<dbReference type="GO" id="GO:0071222">
    <property type="term" value="P:cellular response to lipopolysaccharide"/>
    <property type="evidence" value="ECO:0000318"/>
    <property type="project" value="GO_Central"/>
</dbReference>
<dbReference type="GO" id="GO:0006935">
    <property type="term" value="P:chemotaxis"/>
    <property type="evidence" value="ECO:0000304"/>
    <property type="project" value="ProtInc"/>
</dbReference>
<dbReference type="GO" id="GO:0050832">
    <property type="term" value="P:defense response to fungus"/>
    <property type="evidence" value="ECO:0007669"/>
    <property type="project" value="UniProtKB-KW"/>
</dbReference>
<dbReference type="GO" id="GO:0050829">
    <property type="term" value="P:defense response to Gram-negative bacterium"/>
    <property type="evidence" value="ECO:0000318"/>
    <property type="project" value="GO_Central"/>
</dbReference>
<dbReference type="GO" id="GO:0050830">
    <property type="term" value="P:defense response to Gram-positive bacterium"/>
    <property type="evidence" value="ECO:0000314"/>
    <property type="project" value="UniProtKB"/>
</dbReference>
<dbReference type="GO" id="GO:0042832">
    <property type="term" value="P:defense response to protozoan"/>
    <property type="evidence" value="ECO:0000315"/>
    <property type="project" value="UniProtKB"/>
</dbReference>
<dbReference type="GO" id="GO:0051607">
    <property type="term" value="P:defense response to virus"/>
    <property type="evidence" value="ECO:0007669"/>
    <property type="project" value="UniProtKB-KW"/>
</dbReference>
<dbReference type="GO" id="GO:0051673">
    <property type="term" value="P:disruption of plasma membrane integrity in another organism"/>
    <property type="evidence" value="ECO:0000318"/>
    <property type="project" value="GO_Central"/>
</dbReference>
<dbReference type="GO" id="GO:0030520">
    <property type="term" value="P:estrogen receptor signaling pathway"/>
    <property type="evidence" value="ECO:0000314"/>
    <property type="project" value="UniProtKB"/>
</dbReference>
<dbReference type="GO" id="GO:0006955">
    <property type="term" value="P:immune response"/>
    <property type="evidence" value="ECO:0000304"/>
    <property type="project" value="ProtInc"/>
</dbReference>
<dbReference type="GO" id="GO:0002227">
    <property type="term" value="P:innate immune response in mucosa"/>
    <property type="evidence" value="ECO:0000314"/>
    <property type="project" value="UniProtKB"/>
</dbReference>
<dbReference type="GO" id="GO:0051873">
    <property type="term" value="P:killing by host of symbiont cells"/>
    <property type="evidence" value="ECO:0000314"/>
    <property type="project" value="UniProtKB"/>
</dbReference>
<dbReference type="GO" id="GO:0031640">
    <property type="term" value="P:killing of cells of another organism"/>
    <property type="evidence" value="ECO:0000314"/>
    <property type="project" value="UniProtKB"/>
</dbReference>
<dbReference type="GO" id="GO:0010818">
    <property type="term" value="P:T cell chemotaxis"/>
    <property type="evidence" value="ECO:0000314"/>
    <property type="project" value="UniProtKB"/>
</dbReference>
<dbReference type="InterPro" id="IPR016327">
    <property type="entry name" value="Alpha-defensin"/>
</dbReference>
<dbReference type="InterPro" id="IPR006081">
    <property type="entry name" value="Alpha-defensin_C"/>
</dbReference>
<dbReference type="InterPro" id="IPR002366">
    <property type="entry name" value="Alpha-defensin_N"/>
</dbReference>
<dbReference type="InterPro" id="IPR006080">
    <property type="entry name" value="Beta/alpha-defensin_C"/>
</dbReference>
<dbReference type="PANTHER" id="PTHR11876">
    <property type="entry name" value="ALPHA-DEFENSIN 1"/>
    <property type="match status" value="1"/>
</dbReference>
<dbReference type="PANTHER" id="PTHR11876:SF19">
    <property type="entry name" value="NEUTROPHIL DEFENSIN 1-RELATED"/>
    <property type="match status" value="1"/>
</dbReference>
<dbReference type="Pfam" id="PF00323">
    <property type="entry name" value="Defensin_1"/>
    <property type="match status" value="1"/>
</dbReference>
<dbReference type="Pfam" id="PF00879">
    <property type="entry name" value="Defensin_propep"/>
    <property type="match status" value="1"/>
</dbReference>
<dbReference type="PIRSF" id="PIRSF001875">
    <property type="entry name" value="Alpha-defensin"/>
    <property type="match status" value="1"/>
</dbReference>
<dbReference type="SMART" id="SM01418">
    <property type="entry name" value="Defensin_propep"/>
    <property type="match status" value="1"/>
</dbReference>
<dbReference type="SMART" id="SM00048">
    <property type="entry name" value="DEFSN"/>
    <property type="match status" value="1"/>
</dbReference>
<dbReference type="SUPFAM" id="SSF57392">
    <property type="entry name" value="Defensin-like"/>
    <property type="match status" value="1"/>
</dbReference>
<dbReference type="PROSITE" id="PS00269">
    <property type="entry name" value="DEFENSIN"/>
    <property type="match status" value="1"/>
</dbReference>
<organism>
    <name type="scientific">Homo sapiens</name>
    <name type="common">Human</name>
    <dbReference type="NCBI Taxonomy" id="9606"/>
    <lineage>
        <taxon>Eukaryota</taxon>
        <taxon>Metazoa</taxon>
        <taxon>Chordata</taxon>
        <taxon>Craniata</taxon>
        <taxon>Vertebrata</taxon>
        <taxon>Euteleostomi</taxon>
        <taxon>Mammalia</taxon>
        <taxon>Eutheria</taxon>
        <taxon>Euarchontoglires</taxon>
        <taxon>Primates</taxon>
        <taxon>Haplorrhini</taxon>
        <taxon>Catarrhini</taxon>
        <taxon>Hominidae</taxon>
        <taxon>Homo</taxon>
    </lineage>
</organism>